<comment type="function">
    <text evidence="1">May be involved in fusion of ER-derived transport vesicles with the Golgi complex.</text>
</comment>
<comment type="subcellular location">
    <subcellularLocation>
        <location evidence="1">Golgi apparatus membrane</location>
        <topology evidence="1">Multi-pass membrane protein</topology>
    </subcellularLocation>
</comment>
<comment type="similarity">
    <text evidence="3">Belongs to the GOT1 family.</text>
</comment>
<keyword id="KW-0333">Golgi apparatus</keyword>
<keyword id="KW-0472">Membrane</keyword>
<keyword id="KW-0653">Protein transport</keyword>
<keyword id="KW-1185">Reference proteome</keyword>
<keyword id="KW-0812">Transmembrane</keyword>
<keyword id="KW-1133">Transmembrane helix</keyword>
<keyword id="KW-0813">Transport</keyword>
<protein>
    <recommendedName>
        <fullName>Protein transport protein got1 homolog</fullName>
    </recommendedName>
    <alternativeName>
        <fullName>Golgi transport protein 1</fullName>
    </alternativeName>
</protein>
<gene>
    <name type="primary">golt1</name>
    <name type="ORF">DDB_G0292868</name>
</gene>
<sequence length="138" mass="15343">MFTDQQKIGAMLSAMGLFFGFLGVLLFLDRNLLALGNLLLVSGIVLILGLQKTTKFFAQKKKIKGTILFFFGIVVLLVTRWTFVGMVIEIFGFVNLFGDAFPIVISILRKLPIIGNILNHPLVNRLLQKADSGNELPF</sequence>
<feature type="chain" id="PRO_0000327623" description="Protein transport protein got1 homolog">
    <location>
        <begin position="1"/>
        <end position="138"/>
    </location>
</feature>
<feature type="topological domain" description="Cytoplasmic" evidence="2">
    <location>
        <begin position="1"/>
        <end position="7"/>
    </location>
</feature>
<feature type="transmembrane region" description="Helical; Name=1" evidence="2">
    <location>
        <begin position="8"/>
        <end position="28"/>
    </location>
</feature>
<feature type="topological domain" description="Lumenal" evidence="2">
    <location>
        <begin position="29"/>
        <end position="30"/>
    </location>
</feature>
<feature type="transmembrane region" description="Helical; Name=2" evidence="2">
    <location>
        <begin position="31"/>
        <end position="51"/>
    </location>
</feature>
<feature type="topological domain" description="Cytoplasmic" evidence="2">
    <location>
        <begin position="52"/>
        <end position="62"/>
    </location>
</feature>
<feature type="transmembrane region" description="Helical; Name=3" evidence="2">
    <location>
        <begin position="63"/>
        <end position="82"/>
    </location>
</feature>
<feature type="topological domain" description="Lumenal" evidence="2">
    <location>
        <begin position="83"/>
        <end position="87"/>
    </location>
</feature>
<feature type="transmembrane region" description="Helical; Name=4" evidence="2">
    <location>
        <begin position="88"/>
        <end position="108"/>
    </location>
</feature>
<feature type="topological domain" description="Cytoplasmic" evidence="2">
    <location>
        <begin position="109"/>
        <end position="138"/>
    </location>
</feature>
<name>GOT1_DICDI</name>
<organism>
    <name type="scientific">Dictyostelium discoideum</name>
    <name type="common">Social amoeba</name>
    <dbReference type="NCBI Taxonomy" id="44689"/>
    <lineage>
        <taxon>Eukaryota</taxon>
        <taxon>Amoebozoa</taxon>
        <taxon>Evosea</taxon>
        <taxon>Eumycetozoa</taxon>
        <taxon>Dictyostelia</taxon>
        <taxon>Dictyosteliales</taxon>
        <taxon>Dictyosteliaceae</taxon>
        <taxon>Dictyostelium</taxon>
    </lineage>
</organism>
<reference key="1">
    <citation type="journal article" date="2005" name="Nature">
        <title>The genome of the social amoeba Dictyostelium discoideum.</title>
        <authorList>
            <person name="Eichinger L."/>
            <person name="Pachebat J.A."/>
            <person name="Gloeckner G."/>
            <person name="Rajandream M.A."/>
            <person name="Sucgang R."/>
            <person name="Berriman M."/>
            <person name="Song J."/>
            <person name="Olsen R."/>
            <person name="Szafranski K."/>
            <person name="Xu Q."/>
            <person name="Tunggal B."/>
            <person name="Kummerfeld S."/>
            <person name="Madera M."/>
            <person name="Konfortov B.A."/>
            <person name="Rivero F."/>
            <person name="Bankier A.T."/>
            <person name="Lehmann R."/>
            <person name="Hamlin N."/>
            <person name="Davies R."/>
            <person name="Gaudet P."/>
            <person name="Fey P."/>
            <person name="Pilcher K."/>
            <person name="Chen G."/>
            <person name="Saunders D."/>
            <person name="Sodergren E.J."/>
            <person name="Davis P."/>
            <person name="Kerhornou A."/>
            <person name="Nie X."/>
            <person name="Hall N."/>
            <person name="Anjard C."/>
            <person name="Hemphill L."/>
            <person name="Bason N."/>
            <person name="Farbrother P."/>
            <person name="Desany B."/>
            <person name="Just E."/>
            <person name="Morio T."/>
            <person name="Rost R."/>
            <person name="Churcher C.M."/>
            <person name="Cooper J."/>
            <person name="Haydock S."/>
            <person name="van Driessche N."/>
            <person name="Cronin A."/>
            <person name="Goodhead I."/>
            <person name="Muzny D.M."/>
            <person name="Mourier T."/>
            <person name="Pain A."/>
            <person name="Lu M."/>
            <person name="Harper D."/>
            <person name="Lindsay R."/>
            <person name="Hauser H."/>
            <person name="James K.D."/>
            <person name="Quiles M."/>
            <person name="Madan Babu M."/>
            <person name="Saito T."/>
            <person name="Buchrieser C."/>
            <person name="Wardroper A."/>
            <person name="Felder M."/>
            <person name="Thangavelu M."/>
            <person name="Johnson D."/>
            <person name="Knights A."/>
            <person name="Loulseged H."/>
            <person name="Mungall K.L."/>
            <person name="Oliver K."/>
            <person name="Price C."/>
            <person name="Quail M.A."/>
            <person name="Urushihara H."/>
            <person name="Hernandez J."/>
            <person name="Rabbinowitsch E."/>
            <person name="Steffen D."/>
            <person name="Sanders M."/>
            <person name="Ma J."/>
            <person name="Kohara Y."/>
            <person name="Sharp S."/>
            <person name="Simmonds M.N."/>
            <person name="Spiegler S."/>
            <person name="Tivey A."/>
            <person name="Sugano S."/>
            <person name="White B."/>
            <person name="Walker D."/>
            <person name="Woodward J.R."/>
            <person name="Winckler T."/>
            <person name="Tanaka Y."/>
            <person name="Shaulsky G."/>
            <person name="Schleicher M."/>
            <person name="Weinstock G.M."/>
            <person name="Rosenthal A."/>
            <person name="Cox E.C."/>
            <person name="Chisholm R.L."/>
            <person name="Gibbs R.A."/>
            <person name="Loomis W.F."/>
            <person name="Platzer M."/>
            <person name="Kay R.R."/>
            <person name="Williams J.G."/>
            <person name="Dear P.H."/>
            <person name="Noegel A.A."/>
            <person name="Barrell B.G."/>
            <person name="Kuspa A."/>
        </authorList>
    </citation>
    <scope>NUCLEOTIDE SEQUENCE [LARGE SCALE GENOMIC DNA]</scope>
    <source>
        <strain>AX4</strain>
    </source>
</reference>
<proteinExistence type="inferred from homology"/>
<accession>Q54CL4</accession>
<dbReference type="EMBL" id="AAFI02000197">
    <property type="protein sequence ID" value="EAL60983.1"/>
    <property type="molecule type" value="Genomic_DNA"/>
</dbReference>
<dbReference type="RefSeq" id="XP_629402.1">
    <property type="nucleotide sequence ID" value="XM_629400.1"/>
</dbReference>
<dbReference type="FunCoup" id="Q54CL4">
    <property type="interactions" value="832"/>
</dbReference>
<dbReference type="STRING" id="44689.Q54CL4"/>
<dbReference type="PaxDb" id="44689-DDB0266392"/>
<dbReference type="EnsemblProtists" id="EAL60983">
    <property type="protein sequence ID" value="EAL60983"/>
    <property type="gene ID" value="DDB_G0292868"/>
</dbReference>
<dbReference type="GeneID" id="8628921"/>
<dbReference type="KEGG" id="ddi:DDB_G0292868"/>
<dbReference type="dictyBase" id="DDB_G0292868">
    <property type="gene designation" value="golt1"/>
</dbReference>
<dbReference type="VEuPathDB" id="AmoebaDB:DDB_G0292868"/>
<dbReference type="eggNOG" id="KOG1743">
    <property type="taxonomic scope" value="Eukaryota"/>
</dbReference>
<dbReference type="HOGENOM" id="CLU_124519_1_0_1"/>
<dbReference type="InParanoid" id="Q54CL4"/>
<dbReference type="OMA" id="MWLTDAQ"/>
<dbReference type="PhylomeDB" id="Q54CL4"/>
<dbReference type="PRO" id="PR:Q54CL4"/>
<dbReference type="Proteomes" id="UP000002195">
    <property type="component" value="Chromosome 6"/>
</dbReference>
<dbReference type="GO" id="GO:0005829">
    <property type="term" value="C:cytosol"/>
    <property type="evidence" value="ECO:0007669"/>
    <property type="project" value="GOC"/>
</dbReference>
<dbReference type="GO" id="GO:0005783">
    <property type="term" value="C:endoplasmic reticulum"/>
    <property type="evidence" value="ECO:0000318"/>
    <property type="project" value="GO_Central"/>
</dbReference>
<dbReference type="GO" id="GO:0000139">
    <property type="term" value="C:Golgi membrane"/>
    <property type="evidence" value="ECO:0007669"/>
    <property type="project" value="UniProtKB-SubCell"/>
</dbReference>
<dbReference type="GO" id="GO:0016020">
    <property type="term" value="C:membrane"/>
    <property type="evidence" value="ECO:0000318"/>
    <property type="project" value="GO_Central"/>
</dbReference>
<dbReference type="GO" id="GO:0006888">
    <property type="term" value="P:endoplasmic reticulum to Golgi vesicle-mediated transport"/>
    <property type="evidence" value="ECO:0007669"/>
    <property type="project" value="InterPro"/>
</dbReference>
<dbReference type="GO" id="GO:0015031">
    <property type="term" value="P:protein transport"/>
    <property type="evidence" value="ECO:0007669"/>
    <property type="project" value="UniProtKB-KW"/>
</dbReference>
<dbReference type="GO" id="GO:0042147">
    <property type="term" value="P:retrograde transport, endosome to Golgi"/>
    <property type="evidence" value="ECO:0007669"/>
    <property type="project" value="InterPro"/>
</dbReference>
<dbReference type="InterPro" id="IPR045176">
    <property type="entry name" value="Got1"/>
</dbReference>
<dbReference type="InterPro" id="IPR007305">
    <property type="entry name" value="Vesicle_transpt_Got1/SFT2"/>
</dbReference>
<dbReference type="PANTHER" id="PTHR21493">
    <property type="entry name" value="CGI-141-RELATED/LIPASE CONTAINING PROTEIN"/>
    <property type="match status" value="1"/>
</dbReference>
<dbReference type="PANTHER" id="PTHR21493:SF9">
    <property type="entry name" value="GOLGI TRANSPORT PROTEIN 1-RELATED"/>
    <property type="match status" value="1"/>
</dbReference>
<dbReference type="Pfam" id="PF04178">
    <property type="entry name" value="Got1"/>
    <property type="match status" value="1"/>
</dbReference>
<evidence type="ECO:0000250" key="1"/>
<evidence type="ECO:0000255" key="2"/>
<evidence type="ECO:0000305" key="3"/>